<reference key="1">
    <citation type="journal article" date="1994" name="J. Cell Sci.">
        <title>Comparison of human CAP and CAP2, homologs of the yeast adenylyl cyclase-associated proteins.</title>
        <authorList>
            <person name="Yu G."/>
            <person name="Swiston J."/>
            <person name="Young D."/>
        </authorList>
    </citation>
    <scope>NUCLEOTIDE SEQUENCE [MRNA] (ISOFORM 1)</scope>
</reference>
<reference key="2">
    <citation type="submission" date="2004-06" db="EMBL/GenBank/DDBJ databases">
        <title>Cloning of human full open reading frames in Gateway(TM) system entry vector (pDONR201).</title>
        <authorList>
            <person name="Ebert L."/>
            <person name="Schick M."/>
            <person name="Neubert P."/>
            <person name="Schatten R."/>
            <person name="Henze S."/>
            <person name="Korn B."/>
        </authorList>
    </citation>
    <scope>NUCLEOTIDE SEQUENCE [LARGE SCALE MRNA] (ISOFORM 1)</scope>
</reference>
<reference key="3">
    <citation type="journal article" date="2004" name="Nat. Genet.">
        <title>Complete sequencing and characterization of 21,243 full-length human cDNAs.</title>
        <authorList>
            <person name="Ota T."/>
            <person name="Suzuki Y."/>
            <person name="Nishikawa T."/>
            <person name="Otsuki T."/>
            <person name="Sugiyama T."/>
            <person name="Irie R."/>
            <person name="Wakamatsu A."/>
            <person name="Hayashi K."/>
            <person name="Sato H."/>
            <person name="Nagai K."/>
            <person name="Kimura K."/>
            <person name="Makita H."/>
            <person name="Sekine M."/>
            <person name="Obayashi M."/>
            <person name="Nishi T."/>
            <person name="Shibahara T."/>
            <person name="Tanaka T."/>
            <person name="Ishii S."/>
            <person name="Yamamoto J."/>
            <person name="Saito K."/>
            <person name="Kawai Y."/>
            <person name="Isono Y."/>
            <person name="Nakamura Y."/>
            <person name="Nagahari K."/>
            <person name="Murakami K."/>
            <person name="Yasuda T."/>
            <person name="Iwayanagi T."/>
            <person name="Wagatsuma M."/>
            <person name="Shiratori A."/>
            <person name="Sudo H."/>
            <person name="Hosoiri T."/>
            <person name="Kaku Y."/>
            <person name="Kodaira H."/>
            <person name="Kondo H."/>
            <person name="Sugawara M."/>
            <person name="Takahashi M."/>
            <person name="Kanda K."/>
            <person name="Yokoi T."/>
            <person name="Furuya T."/>
            <person name="Kikkawa E."/>
            <person name="Omura Y."/>
            <person name="Abe K."/>
            <person name="Kamihara K."/>
            <person name="Katsuta N."/>
            <person name="Sato K."/>
            <person name="Tanikawa M."/>
            <person name="Yamazaki M."/>
            <person name="Ninomiya K."/>
            <person name="Ishibashi T."/>
            <person name="Yamashita H."/>
            <person name="Murakawa K."/>
            <person name="Fujimori K."/>
            <person name="Tanai H."/>
            <person name="Kimata M."/>
            <person name="Watanabe M."/>
            <person name="Hiraoka S."/>
            <person name="Chiba Y."/>
            <person name="Ishida S."/>
            <person name="Ono Y."/>
            <person name="Takiguchi S."/>
            <person name="Watanabe S."/>
            <person name="Yosida M."/>
            <person name="Hotuta T."/>
            <person name="Kusano J."/>
            <person name="Kanehori K."/>
            <person name="Takahashi-Fujii A."/>
            <person name="Hara H."/>
            <person name="Tanase T.-O."/>
            <person name="Nomura Y."/>
            <person name="Togiya S."/>
            <person name="Komai F."/>
            <person name="Hara R."/>
            <person name="Takeuchi K."/>
            <person name="Arita M."/>
            <person name="Imose N."/>
            <person name="Musashino K."/>
            <person name="Yuuki H."/>
            <person name="Oshima A."/>
            <person name="Sasaki N."/>
            <person name="Aotsuka S."/>
            <person name="Yoshikawa Y."/>
            <person name="Matsunawa H."/>
            <person name="Ichihara T."/>
            <person name="Shiohata N."/>
            <person name="Sano S."/>
            <person name="Moriya S."/>
            <person name="Momiyama H."/>
            <person name="Satoh N."/>
            <person name="Takami S."/>
            <person name="Terashima Y."/>
            <person name="Suzuki O."/>
            <person name="Nakagawa S."/>
            <person name="Senoh A."/>
            <person name="Mizoguchi H."/>
            <person name="Goto Y."/>
            <person name="Shimizu F."/>
            <person name="Wakebe H."/>
            <person name="Hishigaki H."/>
            <person name="Watanabe T."/>
            <person name="Sugiyama A."/>
            <person name="Takemoto M."/>
            <person name="Kawakami B."/>
            <person name="Yamazaki M."/>
            <person name="Watanabe K."/>
            <person name="Kumagai A."/>
            <person name="Itakura S."/>
            <person name="Fukuzumi Y."/>
            <person name="Fujimori Y."/>
            <person name="Komiyama M."/>
            <person name="Tashiro H."/>
            <person name="Tanigami A."/>
            <person name="Fujiwara T."/>
            <person name="Ono T."/>
            <person name="Yamada K."/>
            <person name="Fujii Y."/>
            <person name="Ozaki K."/>
            <person name="Hirao M."/>
            <person name="Ohmori Y."/>
            <person name="Kawabata A."/>
            <person name="Hikiji T."/>
            <person name="Kobatake N."/>
            <person name="Inagaki H."/>
            <person name="Ikema Y."/>
            <person name="Okamoto S."/>
            <person name="Okitani R."/>
            <person name="Kawakami T."/>
            <person name="Noguchi S."/>
            <person name="Itoh T."/>
            <person name="Shigeta K."/>
            <person name="Senba T."/>
            <person name="Matsumura K."/>
            <person name="Nakajima Y."/>
            <person name="Mizuno T."/>
            <person name="Morinaga M."/>
            <person name="Sasaki M."/>
            <person name="Togashi T."/>
            <person name="Oyama M."/>
            <person name="Hata H."/>
            <person name="Watanabe M."/>
            <person name="Komatsu T."/>
            <person name="Mizushima-Sugano J."/>
            <person name="Satoh T."/>
            <person name="Shirai Y."/>
            <person name="Takahashi Y."/>
            <person name="Nakagawa K."/>
            <person name="Okumura K."/>
            <person name="Nagase T."/>
            <person name="Nomura N."/>
            <person name="Kikuchi H."/>
            <person name="Masuho Y."/>
            <person name="Yamashita R."/>
            <person name="Nakai K."/>
            <person name="Yada T."/>
            <person name="Nakamura Y."/>
            <person name="Ohara O."/>
            <person name="Isogai T."/>
            <person name="Sugano S."/>
        </authorList>
    </citation>
    <scope>NUCLEOTIDE SEQUENCE [LARGE SCALE MRNA] (ISOFORMS 1; 2 AND 3)</scope>
    <source>
        <tissue>Amygdala</tissue>
    </source>
</reference>
<reference key="4">
    <citation type="journal article" date="2003" name="Nature">
        <title>The DNA sequence and analysis of human chromosome 6.</title>
        <authorList>
            <person name="Mungall A.J."/>
            <person name="Palmer S.A."/>
            <person name="Sims S.K."/>
            <person name="Edwards C.A."/>
            <person name="Ashurst J.L."/>
            <person name="Wilming L."/>
            <person name="Jones M.C."/>
            <person name="Horton R."/>
            <person name="Hunt S.E."/>
            <person name="Scott C.E."/>
            <person name="Gilbert J.G.R."/>
            <person name="Clamp M.E."/>
            <person name="Bethel G."/>
            <person name="Milne S."/>
            <person name="Ainscough R."/>
            <person name="Almeida J.P."/>
            <person name="Ambrose K.D."/>
            <person name="Andrews T.D."/>
            <person name="Ashwell R.I.S."/>
            <person name="Babbage A.K."/>
            <person name="Bagguley C.L."/>
            <person name="Bailey J."/>
            <person name="Banerjee R."/>
            <person name="Barker D.J."/>
            <person name="Barlow K.F."/>
            <person name="Bates K."/>
            <person name="Beare D.M."/>
            <person name="Beasley H."/>
            <person name="Beasley O."/>
            <person name="Bird C.P."/>
            <person name="Blakey S.E."/>
            <person name="Bray-Allen S."/>
            <person name="Brook J."/>
            <person name="Brown A.J."/>
            <person name="Brown J.Y."/>
            <person name="Burford D.C."/>
            <person name="Burrill W."/>
            <person name="Burton J."/>
            <person name="Carder C."/>
            <person name="Carter N.P."/>
            <person name="Chapman J.C."/>
            <person name="Clark S.Y."/>
            <person name="Clark G."/>
            <person name="Clee C.M."/>
            <person name="Clegg S."/>
            <person name="Cobley V."/>
            <person name="Collier R.E."/>
            <person name="Collins J.E."/>
            <person name="Colman L.K."/>
            <person name="Corby N.R."/>
            <person name="Coville G.J."/>
            <person name="Culley K.M."/>
            <person name="Dhami P."/>
            <person name="Davies J."/>
            <person name="Dunn M."/>
            <person name="Earthrowl M.E."/>
            <person name="Ellington A.E."/>
            <person name="Evans K.A."/>
            <person name="Faulkner L."/>
            <person name="Francis M.D."/>
            <person name="Frankish A."/>
            <person name="Frankland J."/>
            <person name="French L."/>
            <person name="Garner P."/>
            <person name="Garnett J."/>
            <person name="Ghori M.J."/>
            <person name="Gilby L.M."/>
            <person name="Gillson C.J."/>
            <person name="Glithero R.J."/>
            <person name="Grafham D.V."/>
            <person name="Grant M."/>
            <person name="Gribble S."/>
            <person name="Griffiths C."/>
            <person name="Griffiths M.N.D."/>
            <person name="Hall R."/>
            <person name="Halls K.S."/>
            <person name="Hammond S."/>
            <person name="Harley J.L."/>
            <person name="Hart E.A."/>
            <person name="Heath P.D."/>
            <person name="Heathcott R."/>
            <person name="Holmes S.J."/>
            <person name="Howden P.J."/>
            <person name="Howe K.L."/>
            <person name="Howell G.R."/>
            <person name="Huckle E."/>
            <person name="Humphray S.J."/>
            <person name="Humphries M.D."/>
            <person name="Hunt A.R."/>
            <person name="Johnson C.M."/>
            <person name="Joy A.A."/>
            <person name="Kay M."/>
            <person name="Keenan S.J."/>
            <person name="Kimberley A.M."/>
            <person name="King A."/>
            <person name="Laird G.K."/>
            <person name="Langford C."/>
            <person name="Lawlor S."/>
            <person name="Leongamornlert D.A."/>
            <person name="Leversha M."/>
            <person name="Lloyd C.R."/>
            <person name="Lloyd D.M."/>
            <person name="Loveland J.E."/>
            <person name="Lovell J."/>
            <person name="Martin S."/>
            <person name="Mashreghi-Mohammadi M."/>
            <person name="Maslen G.L."/>
            <person name="Matthews L."/>
            <person name="McCann O.T."/>
            <person name="McLaren S.J."/>
            <person name="McLay K."/>
            <person name="McMurray A."/>
            <person name="Moore M.J.F."/>
            <person name="Mullikin J.C."/>
            <person name="Niblett D."/>
            <person name="Nickerson T."/>
            <person name="Novik K.L."/>
            <person name="Oliver K."/>
            <person name="Overton-Larty E.K."/>
            <person name="Parker A."/>
            <person name="Patel R."/>
            <person name="Pearce A.V."/>
            <person name="Peck A.I."/>
            <person name="Phillimore B.J.C.T."/>
            <person name="Phillips S."/>
            <person name="Plumb R.W."/>
            <person name="Porter K.M."/>
            <person name="Ramsey Y."/>
            <person name="Ranby S.A."/>
            <person name="Rice C.M."/>
            <person name="Ross M.T."/>
            <person name="Searle S.M."/>
            <person name="Sehra H.K."/>
            <person name="Sheridan E."/>
            <person name="Skuce C.D."/>
            <person name="Smith S."/>
            <person name="Smith M."/>
            <person name="Spraggon L."/>
            <person name="Squares S.L."/>
            <person name="Steward C.A."/>
            <person name="Sycamore N."/>
            <person name="Tamlyn-Hall G."/>
            <person name="Tester J."/>
            <person name="Theaker A.J."/>
            <person name="Thomas D.W."/>
            <person name="Thorpe A."/>
            <person name="Tracey A."/>
            <person name="Tromans A."/>
            <person name="Tubby B."/>
            <person name="Wall M."/>
            <person name="Wallis J.M."/>
            <person name="West A.P."/>
            <person name="White S.S."/>
            <person name="Whitehead S.L."/>
            <person name="Whittaker H."/>
            <person name="Wild A."/>
            <person name="Willey D.J."/>
            <person name="Wilmer T.E."/>
            <person name="Wood J.M."/>
            <person name="Wray P.W."/>
            <person name="Wyatt J.C."/>
            <person name="Young L."/>
            <person name="Younger R.M."/>
            <person name="Bentley D.R."/>
            <person name="Coulson A."/>
            <person name="Durbin R.M."/>
            <person name="Hubbard T."/>
            <person name="Sulston J.E."/>
            <person name="Dunham I."/>
            <person name="Rogers J."/>
            <person name="Beck S."/>
        </authorList>
    </citation>
    <scope>NUCLEOTIDE SEQUENCE [LARGE SCALE GENOMIC DNA]</scope>
</reference>
<reference key="5">
    <citation type="submission" date="2005-07" db="EMBL/GenBank/DDBJ databases">
        <authorList>
            <person name="Mural R.J."/>
            <person name="Istrail S."/>
            <person name="Sutton G.G."/>
            <person name="Florea L."/>
            <person name="Halpern A.L."/>
            <person name="Mobarry C.M."/>
            <person name="Lippert R."/>
            <person name="Walenz B."/>
            <person name="Shatkay H."/>
            <person name="Dew I."/>
            <person name="Miller J.R."/>
            <person name="Flanigan M.J."/>
            <person name="Edwards N.J."/>
            <person name="Bolanos R."/>
            <person name="Fasulo D."/>
            <person name="Halldorsson B.V."/>
            <person name="Hannenhalli S."/>
            <person name="Turner R."/>
            <person name="Yooseph S."/>
            <person name="Lu F."/>
            <person name="Nusskern D.R."/>
            <person name="Shue B.C."/>
            <person name="Zheng X.H."/>
            <person name="Zhong F."/>
            <person name="Delcher A.L."/>
            <person name="Huson D.H."/>
            <person name="Kravitz S.A."/>
            <person name="Mouchard L."/>
            <person name="Reinert K."/>
            <person name="Remington K.A."/>
            <person name="Clark A.G."/>
            <person name="Waterman M.S."/>
            <person name="Eichler E.E."/>
            <person name="Adams M.D."/>
            <person name="Hunkapiller M.W."/>
            <person name="Myers E.W."/>
            <person name="Venter J.C."/>
        </authorList>
    </citation>
    <scope>NUCLEOTIDE SEQUENCE [LARGE SCALE GENOMIC DNA]</scope>
</reference>
<reference key="6">
    <citation type="journal article" date="2004" name="Genome Res.">
        <title>The status, quality, and expansion of the NIH full-length cDNA project: the Mammalian Gene Collection (MGC).</title>
        <authorList>
            <consortium name="The MGC Project Team"/>
        </authorList>
    </citation>
    <scope>NUCLEOTIDE SEQUENCE [LARGE SCALE MRNA] (ISOFORM 1)</scope>
    <source>
        <tissue>Prostate</tissue>
    </source>
</reference>
<reference key="7">
    <citation type="journal article" date="2011" name="Sci. Signal.">
        <title>System-wide temporal characterization of the proteome and phosphoproteome of human embryonic stem cell differentiation.</title>
        <authorList>
            <person name="Rigbolt K.T."/>
            <person name="Prokhorova T.A."/>
            <person name="Akimov V."/>
            <person name="Henningsen J."/>
            <person name="Johansen P.T."/>
            <person name="Kratchmarova I."/>
            <person name="Kassem M."/>
            <person name="Mann M."/>
            <person name="Olsen J.V."/>
            <person name="Blagoev B."/>
        </authorList>
    </citation>
    <scope>IDENTIFICATION BY MASS SPECTROMETRY [LARGE SCALE ANALYSIS]</scope>
</reference>
<reference key="8">
    <citation type="journal article" date="2012" name="Mol. Cell. Proteomics">
        <title>Comparative large-scale characterisation of plant vs. mammal proteins reveals similar and idiosyncratic N-alpha acetylation features.</title>
        <authorList>
            <person name="Bienvenut W.V."/>
            <person name="Sumpton D."/>
            <person name="Martinez A."/>
            <person name="Lilla S."/>
            <person name="Espagne C."/>
            <person name="Meinnel T."/>
            <person name="Giglione C."/>
        </authorList>
    </citation>
    <scope>ACETYLATION [LARGE SCALE ANALYSIS] AT ALA-2</scope>
    <scope>CLEAVAGE OF INITIATOR METHIONINE [LARGE SCALE ANALYSIS]</scope>
    <scope>IDENTIFICATION BY MASS SPECTROMETRY [LARGE SCALE ANALYSIS]</scope>
</reference>
<reference key="9">
    <citation type="journal article" date="2012" name="Proc. Natl. Acad. Sci. U.S.A.">
        <title>N-terminal acetylome analyses and functional insights of the N-terminal acetyltransferase NatB.</title>
        <authorList>
            <person name="Van Damme P."/>
            <person name="Lasa M."/>
            <person name="Polevoda B."/>
            <person name="Gazquez C."/>
            <person name="Elosegui-Artola A."/>
            <person name="Kim D.S."/>
            <person name="De Juan-Pardo E."/>
            <person name="Demeyer K."/>
            <person name="Hole K."/>
            <person name="Larrea E."/>
            <person name="Timmerman E."/>
            <person name="Prieto J."/>
            <person name="Arnesen T."/>
            <person name="Sherman F."/>
            <person name="Gevaert K."/>
            <person name="Aldabe R."/>
        </authorList>
    </citation>
    <scope>ACETYLATION [LARGE SCALE ANALYSIS] AT ALA-2</scope>
    <scope>CLEAVAGE OF INITIATOR METHIONINE [LARGE SCALE ANALYSIS]</scope>
    <scope>IDENTIFICATION BY MASS SPECTROMETRY [LARGE SCALE ANALYSIS]</scope>
</reference>
<reference key="10">
    <citation type="journal article" date="2014" name="J. Proteomics">
        <title>An enzyme assisted RP-RPLC approach for in-depth analysis of human liver phosphoproteome.</title>
        <authorList>
            <person name="Bian Y."/>
            <person name="Song C."/>
            <person name="Cheng K."/>
            <person name="Dong M."/>
            <person name="Wang F."/>
            <person name="Huang J."/>
            <person name="Sun D."/>
            <person name="Wang L."/>
            <person name="Ye M."/>
            <person name="Zou H."/>
        </authorList>
    </citation>
    <scope>PHOSPHORYLATION [LARGE SCALE ANALYSIS] AT SER-309</scope>
    <scope>IDENTIFICATION BY MASS SPECTROMETRY [LARGE SCALE ANALYSIS]</scope>
    <source>
        <tissue>Liver</tissue>
    </source>
</reference>
<reference key="11">
    <citation type="journal article" date="2019" name="J. Med. Genet.">
        <title>CAP2 mutation leads to impaired actin dynamics and associates with supraventricular tachycardia and dilated cardiomyopathy.</title>
        <authorList>
            <person name="Aspit L."/>
            <person name="Levitas A."/>
            <person name="Etzion S."/>
            <person name="Krymko H."/>
            <person name="Slanovic L."/>
            <person name="Zarivach R."/>
            <person name="Etzion Y."/>
            <person name="Parvari R."/>
        </authorList>
    </citation>
    <scope>INVOLVEMENT IN CMD2I</scope>
    <scope>FUNCTION</scope>
</reference>
<reference key="12">
    <citation type="journal article" date="2020" name="NPJ Genom. Med.">
        <title>Genomic testing in 1019 individuals from 349 Pakistani families results in high diagnostic yield and clinical utility.</title>
        <authorList>
            <person name="Cheema H."/>
            <person name="Bertoli-Avella A.M."/>
            <person name="Skrahina V."/>
            <person name="Anjum M.N."/>
            <person name="Waheed N."/>
            <person name="Saeed A."/>
            <person name="Beetz C."/>
            <person name="Perez-Lopez J."/>
            <person name="Rocha M.E."/>
            <person name="Alawbathani S."/>
            <person name="Pereira C."/>
            <person name="Hovakimyan M."/>
            <person name="Patric I.R.P."/>
            <person name="Paknia O."/>
            <person name="Ameziane N."/>
            <person name="Cozma C."/>
            <person name="Bauer P."/>
            <person name="Rolfs A."/>
        </authorList>
    </citation>
    <scope>INVOLVEMENT IN CMD2I</scope>
    <scope>VARIANT CMD2I 316-TYR--ALA-477 DEL</scope>
</reference>
<reference key="13">
    <citation type="journal article" date="2022" name="Am. J. Med. Genet. A">
        <title>A homozygous CAP2 pathogenic variant in a neonate presenting with rapidly progressive cardiomyopathy and nemaline rods.</title>
        <authorList>
            <person name="Gurunathan S."/>
            <person name="Sebastian J."/>
            <person name="Baker J."/>
            <person name="Abdel-Hamid H.Z."/>
            <person name="West S.C."/>
            <person name="Feingold B."/>
            <person name="Peche V."/>
            <person name="Reyes-Mugica M."/>
            <person name="Madan-Khetarpal S."/>
            <person name="Field J."/>
        </authorList>
    </citation>
    <scope>INVOLVEMENT IN CMD2I</scope>
</reference>
<sequence length="477" mass="52824">MANMQGLVERLERAVSRLESLSAESHRPPGNCGEVNGVIAGVAPSVEAFDKLMDSMVAEFLKNSRILAGDVETHAEMVHSAFQAQRAFLLMASQYQQPHENDVAALLKPISEKIQEIQTFRERNRGSNMFNHLSAVSESIPALGWIAVSPKPGPYVKEMNDAATFYTNRVLKDYKHSDLRHVDWVKSYLNIWSELQAYIKEHHTTGLTWSKTGPVASTVSAFSVLSSGPGLPPPPPPLPPPGPPPLFENEGKKEESSPSRSALFAQLNQGEAITKGLRHVTDDQKTYKNPSLRAQGGQTQSPTKSHTPSPTSPKSYPSQKHAPVLELEGKKWRVEYQEDRNDLVISETELKQVAYIFKCEKSTIQIKGKVNSIIIDNCKKLGLVFDNVVGIVEVINSQDIQIQVMGRVPTISINKTEGCHIYLSEDALDCEIVSAKSSEMNILIPQDGDYREFPIPEQFKTAWDGSKLITEPAEIMA</sequence>
<evidence type="ECO:0000250" key="1"/>
<evidence type="ECO:0000250" key="2">
    <source>
        <dbReference type="UniProtKB" id="P52481"/>
    </source>
</evidence>
<evidence type="ECO:0000255" key="3">
    <source>
        <dbReference type="PROSITE-ProRule" id="PRU00659"/>
    </source>
</evidence>
<evidence type="ECO:0000256" key="4">
    <source>
        <dbReference type="SAM" id="MobiDB-lite"/>
    </source>
</evidence>
<evidence type="ECO:0000269" key="5">
    <source>
    </source>
</evidence>
<evidence type="ECO:0000269" key="6">
    <source>
    </source>
</evidence>
<evidence type="ECO:0000269" key="7">
    <source>
    </source>
</evidence>
<evidence type="ECO:0000303" key="8">
    <source>
    </source>
</evidence>
<evidence type="ECO:0000305" key="9"/>
<evidence type="ECO:0007744" key="10">
    <source>
    </source>
</evidence>
<evidence type="ECO:0007744" key="11">
    <source>
    </source>
</evidence>
<evidence type="ECO:0007744" key="12">
    <source>
    </source>
</evidence>
<name>CAP2_HUMAN</name>
<dbReference type="EMBL" id="U02390">
    <property type="protein sequence ID" value="AAA20587.1"/>
    <property type="molecule type" value="mRNA"/>
</dbReference>
<dbReference type="EMBL" id="CR457022">
    <property type="protein sequence ID" value="CAG33303.1"/>
    <property type="molecule type" value="mRNA"/>
</dbReference>
<dbReference type="EMBL" id="AK294215">
    <property type="protein sequence ID" value="BAH11700.1"/>
    <property type="molecule type" value="mRNA"/>
</dbReference>
<dbReference type="EMBL" id="AL034372">
    <property type="status" value="NOT_ANNOTATED_CDS"/>
    <property type="molecule type" value="Genomic_DNA"/>
</dbReference>
<dbReference type="EMBL" id="AL138824">
    <property type="status" value="NOT_ANNOTATED_CDS"/>
    <property type="molecule type" value="Genomic_DNA"/>
</dbReference>
<dbReference type="EMBL" id="AK293134">
    <property type="protein sequence ID" value="BAH11460.1"/>
    <property type="molecule type" value="mRNA"/>
</dbReference>
<dbReference type="EMBL" id="AK312362">
    <property type="protein sequence ID" value="BAG35280.1"/>
    <property type="molecule type" value="mRNA"/>
</dbReference>
<dbReference type="EMBL" id="CH471087">
    <property type="protein sequence ID" value="EAW55380.1"/>
    <property type="molecule type" value="Genomic_DNA"/>
</dbReference>
<dbReference type="EMBL" id="BC008481">
    <property type="protein sequence ID" value="AAH08481.1"/>
    <property type="molecule type" value="mRNA"/>
</dbReference>
<dbReference type="CCDS" id="CCDS4539.1">
    <molecule id="P40123-1"/>
</dbReference>
<dbReference type="PIR" id="I38409">
    <property type="entry name" value="I38409"/>
</dbReference>
<dbReference type="RefSeq" id="NP_006357.1">
    <molecule id="P40123-1"/>
    <property type="nucleotide sequence ID" value="NM_006366.3"/>
</dbReference>
<dbReference type="SMR" id="P40123"/>
<dbReference type="BioGRID" id="115749">
    <property type="interactions" value="72"/>
</dbReference>
<dbReference type="FunCoup" id="P40123">
    <property type="interactions" value="1058"/>
</dbReference>
<dbReference type="IntAct" id="P40123">
    <property type="interactions" value="36"/>
</dbReference>
<dbReference type="MINT" id="P40123"/>
<dbReference type="STRING" id="9606.ENSP00000229922"/>
<dbReference type="GlyGen" id="P40123">
    <property type="glycosylation" value="2 sites, 1 O-linked glycan (1 site)"/>
</dbReference>
<dbReference type="iPTMnet" id="P40123"/>
<dbReference type="MetOSite" id="P40123"/>
<dbReference type="PhosphoSitePlus" id="P40123"/>
<dbReference type="BioMuta" id="CAP2"/>
<dbReference type="DMDM" id="729015"/>
<dbReference type="jPOST" id="P40123"/>
<dbReference type="MassIVE" id="P40123"/>
<dbReference type="PaxDb" id="9606-ENSP00000229922"/>
<dbReference type="PeptideAtlas" id="P40123"/>
<dbReference type="ProteomicsDB" id="55334">
    <molecule id="P40123-1"/>
</dbReference>
<dbReference type="ProteomicsDB" id="6318"/>
<dbReference type="ProteomicsDB" id="6395"/>
<dbReference type="Pumba" id="P40123"/>
<dbReference type="TopDownProteomics" id="P40123-1">
    <molecule id="P40123-1"/>
</dbReference>
<dbReference type="Antibodypedia" id="25070">
    <property type="antibodies" value="200 antibodies from 25 providers"/>
</dbReference>
<dbReference type="DNASU" id="10486"/>
<dbReference type="Ensembl" id="ENST00000229922.7">
    <molecule id="P40123-1"/>
    <property type="protein sequence ID" value="ENSP00000229922.2"/>
    <property type="gene ID" value="ENSG00000112186.13"/>
</dbReference>
<dbReference type="Ensembl" id="ENST00000465994.5">
    <molecule id="P40123-2"/>
    <property type="protein sequence ID" value="ENSP00000418604.1"/>
    <property type="gene ID" value="ENSG00000112186.13"/>
</dbReference>
<dbReference type="Ensembl" id="ENST00000493172.5">
    <molecule id="P40123-3"/>
    <property type="protein sequence ID" value="ENSP00000417208.1"/>
    <property type="gene ID" value="ENSG00000112186.13"/>
</dbReference>
<dbReference type="GeneID" id="10486"/>
<dbReference type="KEGG" id="hsa:10486"/>
<dbReference type="MANE-Select" id="ENST00000229922.7">
    <property type="protein sequence ID" value="ENSP00000229922.2"/>
    <property type="RefSeq nucleotide sequence ID" value="NM_006366.3"/>
    <property type="RefSeq protein sequence ID" value="NP_006357.1"/>
</dbReference>
<dbReference type="UCSC" id="uc003ncb.4">
    <molecule id="P40123-1"/>
    <property type="organism name" value="human"/>
</dbReference>
<dbReference type="AGR" id="HGNC:20039"/>
<dbReference type="CTD" id="10486"/>
<dbReference type="DisGeNET" id="10486"/>
<dbReference type="GeneCards" id="CAP2"/>
<dbReference type="HGNC" id="HGNC:20039">
    <property type="gene designation" value="CAP2"/>
</dbReference>
<dbReference type="HPA" id="ENSG00000112186">
    <property type="expression patterns" value="Tissue enhanced (skeletal muscle, tongue)"/>
</dbReference>
<dbReference type="MalaCards" id="CAP2"/>
<dbReference type="MIM" id="618385">
    <property type="type" value="gene"/>
</dbReference>
<dbReference type="MIM" id="620462">
    <property type="type" value="phenotype"/>
</dbReference>
<dbReference type="neXtProt" id="NX_P40123"/>
<dbReference type="OpenTargets" id="ENSG00000112186"/>
<dbReference type="Orphanet" id="154">
    <property type="disease" value="Familial isolated dilated cardiomyopathy"/>
</dbReference>
<dbReference type="PharmGKB" id="PA134989437"/>
<dbReference type="VEuPathDB" id="HostDB:ENSG00000112186"/>
<dbReference type="eggNOG" id="KOG2675">
    <property type="taxonomic scope" value="Eukaryota"/>
</dbReference>
<dbReference type="GeneTree" id="ENSGT00390000017955"/>
<dbReference type="HOGENOM" id="CLU_1271928_0_0_1"/>
<dbReference type="InParanoid" id="P40123"/>
<dbReference type="OMA" id="PISDHIH"/>
<dbReference type="OrthoDB" id="1601at2759"/>
<dbReference type="PAN-GO" id="P40123">
    <property type="GO annotations" value="6 GO annotations based on evolutionary models"/>
</dbReference>
<dbReference type="PhylomeDB" id="P40123"/>
<dbReference type="TreeFam" id="TF313791"/>
<dbReference type="PathwayCommons" id="P40123"/>
<dbReference type="Reactome" id="R-HSA-428890">
    <property type="pathway name" value="Role of ABL in ROBO-SLIT signaling"/>
</dbReference>
<dbReference type="SignaLink" id="P40123"/>
<dbReference type="BioGRID-ORCS" id="10486">
    <property type="hits" value="11 hits in 1147 CRISPR screens"/>
</dbReference>
<dbReference type="CD-CODE" id="FB4E32DD">
    <property type="entry name" value="Presynaptic clusters and postsynaptic densities"/>
</dbReference>
<dbReference type="ChiTaRS" id="CAP2">
    <property type="organism name" value="human"/>
</dbReference>
<dbReference type="GeneWiki" id="CAP2"/>
<dbReference type="GenomeRNAi" id="10486"/>
<dbReference type="Pharos" id="P40123">
    <property type="development level" value="Tbio"/>
</dbReference>
<dbReference type="PRO" id="PR:P40123"/>
<dbReference type="Proteomes" id="UP000005640">
    <property type="component" value="Chromosome 6"/>
</dbReference>
<dbReference type="RNAct" id="P40123">
    <property type="molecule type" value="protein"/>
</dbReference>
<dbReference type="Bgee" id="ENSG00000112186">
    <property type="expression patterns" value="Expressed in skeletal muscle tissue of biceps brachii and 188 other cell types or tissues"/>
</dbReference>
<dbReference type="ExpressionAtlas" id="P40123">
    <property type="expression patterns" value="baseline and differential"/>
</dbReference>
<dbReference type="GO" id="GO:0005737">
    <property type="term" value="C:cytoplasm"/>
    <property type="evidence" value="ECO:0000318"/>
    <property type="project" value="GO_Central"/>
</dbReference>
<dbReference type="GO" id="GO:0005886">
    <property type="term" value="C:plasma membrane"/>
    <property type="evidence" value="ECO:0007669"/>
    <property type="project" value="UniProtKB-SubCell"/>
</dbReference>
<dbReference type="GO" id="GO:0014069">
    <property type="term" value="C:postsynaptic density"/>
    <property type="evidence" value="ECO:0007669"/>
    <property type="project" value="Ensembl"/>
</dbReference>
<dbReference type="GO" id="GO:0003779">
    <property type="term" value="F:actin binding"/>
    <property type="evidence" value="ECO:0000318"/>
    <property type="project" value="GO_Central"/>
</dbReference>
<dbReference type="GO" id="GO:0008179">
    <property type="term" value="F:adenylate cyclase binding"/>
    <property type="evidence" value="ECO:0000318"/>
    <property type="project" value="GO_Central"/>
</dbReference>
<dbReference type="GO" id="GO:0042802">
    <property type="term" value="F:identical protein binding"/>
    <property type="evidence" value="ECO:0000353"/>
    <property type="project" value="IntAct"/>
</dbReference>
<dbReference type="GO" id="GO:0007015">
    <property type="term" value="P:actin filament organization"/>
    <property type="evidence" value="ECO:0000318"/>
    <property type="project" value="GO_Central"/>
</dbReference>
<dbReference type="GO" id="GO:0007190">
    <property type="term" value="P:activation of adenylate cyclase activity"/>
    <property type="evidence" value="ECO:0000304"/>
    <property type="project" value="ProtInc"/>
</dbReference>
<dbReference type="GO" id="GO:0019933">
    <property type="term" value="P:cAMP-mediated signaling"/>
    <property type="evidence" value="ECO:0000318"/>
    <property type="project" value="GO_Central"/>
</dbReference>
<dbReference type="GO" id="GO:0000902">
    <property type="term" value="P:cell morphogenesis"/>
    <property type="evidence" value="ECO:0000318"/>
    <property type="project" value="GO_Central"/>
</dbReference>
<dbReference type="GO" id="GO:0007163">
    <property type="term" value="P:establishment or maintenance of cell polarity"/>
    <property type="evidence" value="ECO:0000304"/>
    <property type="project" value="ProtInc"/>
</dbReference>
<dbReference type="GO" id="GO:0099140">
    <property type="term" value="P:presynaptic actin cytoskeleton organization"/>
    <property type="evidence" value="ECO:0007669"/>
    <property type="project" value="Ensembl"/>
</dbReference>
<dbReference type="GO" id="GO:0007165">
    <property type="term" value="P:signal transduction"/>
    <property type="evidence" value="ECO:0000304"/>
    <property type="project" value="ProtInc"/>
</dbReference>
<dbReference type="FunFam" id="1.25.40.330:FF:000001">
    <property type="entry name" value="Adenylyl cyclase-associated protein"/>
    <property type="match status" value="1"/>
</dbReference>
<dbReference type="FunFam" id="2.160.20.70:FF:000001">
    <property type="entry name" value="Adenylyl cyclase-associated protein"/>
    <property type="match status" value="1"/>
</dbReference>
<dbReference type="Gene3D" id="2.160.20.70">
    <property type="match status" value="1"/>
</dbReference>
<dbReference type="Gene3D" id="1.25.40.330">
    <property type="entry name" value="Adenylate cyclase-associated CAP, N-terminal domain"/>
    <property type="match status" value="1"/>
</dbReference>
<dbReference type="InterPro" id="IPR001837">
    <property type="entry name" value="Adenylate_cyclase-assoc_CAP"/>
</dbReference>
<dbReference type="InterPro" id="IPR013912">
    <property type="entry name" value="Adenylate_cyclase-assoc_CAP_C"/>
</dbReference>
<dbReference type="InterPro" id="IPR013992">
    <property type="entry name" value="Adenylate_cyclase-assoc_CAP_N"/>
</dbReference>
<dbReference type="InterPro" id="IPR017901">
    <property type="entry name" value="C-CAP_CF_C-like"/>
</dbReference>
<dbReference type="InterPro" id="IPR016098">
    <property type="entry name" value="CAP/MinC_C"/>
</dbReference>
<dbReference type="InterPro" id="IPR036223">
    <property type="entry name" value="CAP_C_sf"/>
</dbReference>
<dbReference type="InterPro" id="IPR028417">
    <property type="entry name" value="CAP_CS_C"/>
</dbReference>
<dbReference type="InterPro" id="IPR018106">
    <property type="entry name" value="CAP_CS_N"/>
</dbReference>
<dbReference type="InterPro" id="IPR053950">
    <property type="entry name" value="CAP_N"/>
</dbReference>
<dbReference type="InterPro" id="IPR036222">
    <property type="entry name" value="CAP_N_sf"/>
</dbReference>
<dbReference type="InterPro" id="IPR006599">
    <property type="entry name" value="CARP_motif"/>
</dbReference>
<dbReference type="PANTHER" id="PTHR10652">
    <property type="entry name" value="ADENYLYL CYCLASE-ASSOCIATED PROTEIN"/>
    <property type="match status" value="1"/>
</dbReference>
<dbReference type="PANTHER" id="PTHR10652:SF2">
    <property type="entry name" value="ADENYLYL CYCLASE-ASSOCIATED PROTEIN 2"/>
    <property type="match status" value="1"/>
</dbReference>
<dbReference type="Pfam" id="PF08603">
    <property type="entry name" value="CAP_C"/>
    <property type="match status" value="1"/>
</dbReference>
<dbReference type="Pfam" id="PF21938">
    <property type="entry name" value="CAP_N"/>
    <property type="match status" value="1"/>
</dbReference>
<dbReference type="Pfam" id="PF01213">
    <property type="entry name" value="CAP_N-CM"/>
    <property type="match status" value="1"/>
</dbReference>
<dbReference type="SMART" id="SM00673">
    <property type="entry name" value="CARP"/>
    <property type="match status" value="2"/>
</dbReference>
<dbReference type="SUPFAM" id="SSF69340">
    <property type="entry name" value="C-terminal domain of adenylylcyclase associated protein"/>
    <property type="match status" value="1"/>
</dbReference>
<dbReference type="SUPFAM" id="SSF101278">
    <property type="entry name" value="N-terminal domain of adenylylcyclase associated protein, CAP"/>
    <property type="match status" value="1"/>
</dbReference>
<dbReference type="PROSITE" id="PS51329">
    <property type="entry name" value="C_CAP_COFACTOR_C"/>
    <property type="match status" value="1"/>
</dbReference>
<dbReference type="PROSITE" id="PS01088">
    <property type="entry name" value="CAP_1"/>
    <property type="match status" value="1"/>
</dbReference>
<dbReference type="PROSITE" id="PS01089">
    <property type="entry name" value="CAP_2"/>
    <property type="match status" value="1"/>
</dbReference>
<gene>
    <name type="primary">CAP2</name>
</gene>
<comment type="function">
    <text evidence="5">Involved in the regulation of actin polymerization.</text>
</comment>
<comment type="interaction">
    <interactant intactId="EBI-1051165">
        <id>P40123</id>
    </interactant>
    <interactant intactId="EBI-353944">
        <id>P60709</id>
        <label>ACTB</label>
    </interactant>
    <organismsDiffer>false</organismsDiffer>
    <experiments>9</experiments>
</comment>
<comment type="interaction">
    <interactant intactId="EBI-1051165">
        <id>P40123</id>
    </interactant>
    <interactant intactId="EBI-351292">
        <id>P63261</id>
        <label>ACTG1</label>
    </interactant>
    <organismsDiffer>false</organismsDiffer>
    <experiments>13</experiments>
</comment>
<comment type="interaction">
    <interactant intactId="EBI-1051165">
        <id>P40123</id>
    </interactant>
    <interactant intactId="EBI-11102284">
        <id>Q96SZ5</id>
        <label>ADO</label>
    </interactant>
    <organismsDiffer>false</organismsDiffer>
    <experiments>3</experiments>
</comment>
<comment type="interaction">
    <interactant intactId="EBI-1051165">
        <id>P40123</id>
    </interactant>
    <interactant intactId="EBI-3905054">
        <id>P13196</id>
        <label>ALAS1</label>
    </interactant>
    <organismsDiffer>false</organismsDiffer>
    <experiments>3</experiments>
</comment>
<comment type="interaction">
    <interactant intactId="EBI-1051165">
        <id>P40123</id>
    </interactant>
    <interactant intactId="EBI-1051165">
        <id>P40123</id>
        <label>CAP2</label>
    </interactant>
    <organismsDiffer>false</organismsDiffer>
    <experiments>4</experiments>
</comment>
<comment type="interaction">
    <interactant intactId="EBI-1051165">
        <id>P40123</id>
    </interactant>
    <interactant intactId="EBI-10201319">
        <id>Q549N0</id>
        <label>CFL2</label>
    </interactant>
    <organismsDiffer>false</organismsDiffer>
    <experiments>3</experiments>
</comment>
<comment type="interaction">
    <interactant intactId="EBI-1051165">
        <id>P40123</id>
    </interactant>
    <interactant intactId="EBI-5235612">
        <id>A8MXD5</id>
        <label>GRXCR1</label>
    </interactant>
    <organismsDiffer>false</organismsDiffer>
    <experiments>3</experiments>
</comment>
<comment type="interaction">
    <interactant intactId="EBI-1051165">
        <id>P40123</id>
    </interactant>
    <interactant intactId="EBI-9978131">
        <id>Q1KLZ0</id>
        <label>PS1TP5BP1</label>
    </interactant>
    <organismsDiffer>false</organismsDiffer>
    <experiments>3</experiments>
</comment>
<comment type="subcellular location">
    <subcellularLocation>
        <location evidence="1">Cell membrane</location>
        <topology evidence="1">Peripheral membrane protein</topology>
    </subcellularLocation>
</comment>
<comment type="alternative products">
    <event type="alternative splicing"/>
    <isoform>
        <id>P40123-1</id>
        <name>1</name>
        <sequence type="displayed"/>
    </isoform>
    <isoform>
        <id>P40123-2</id>
        <name>2</name>
        <sequence type="described" ref="VSP_055520"/>
    </isoform>
    <isoform>
        <id>P40123-3</id>
        <name>3</name>
        <sequence type="described" ref="VSP_055519"/>
    </isoform>
</comment>
<comment type="disease" evidence="5 6 7">
    <disease id="DI-06740">
        <name>Cardiomyopathy, dilated, 2I</name>
        <acronym>CMD2I</acronym>
        <description>A form of dilated cardiomyopathy, a disorder characterized by ventricular dilation and impaired systolic function, resulting in congestive heart failure and arrhythmia. Patients are at risk of premature death. CMD2I is an autosomal recessive, severe form characterized by onset in infancy or childhood.</description>
        <dbReference type="MIM" id="620462"/>
    </disease>
    <text>The disease is caused by variants affecting the gene represented in this entry.</text>
</comment>
<comment type="similarity">
    <text evidence="9">Belongs to the CAP family.</text>
</comment>
<feature type="initiator methionine" description="Removed" evidence="10 11">
    <location>
        <position position="1"/>
    </location>
</feature>
<feature type="chain" id="PRO_0000205700" description="Adenylyl cyclase-associated protein 2">
    <location>
        <begin position="2"/>
        <end position="477"/>
    </location>
</feature>
<feature type="domain" description="C-CAP/cofactor C-like" evidence="3">
    <location>
        <begin position="317"/>
        <end position="455"/>
    </location>
</feature>
<feature type="region of interest" description="Disordered" evidence="4">
    <location>
        <begin position="225"/>
        <end position="261"/>
    </location>
</feature>
<feature type="region of interest" description="Disordered" evidence="4">
    <location>
        <begin position="274"/>
        <end position="321"/>
    </location>
</feature>
<feature type="compositionally biased region" description="Pro residues" evidence="4">
    <location>
        <begin position="230"/>
        <end position="246"/>
    </location>
</feature>
<feature type="compositionally biased region" description="Low complexity" evidence="4">
    <location>
        <begin position="298"/>
        <end position="320"/>
    </location>
</feature>
<feature type="modified residue" description="N-acetylalanine" evidence="10 11">
    <location>
        <position position="2"/>
    </location>
</feature>
<feature type="modified residue" description="Phosphoserine" evidence="2">
    <location>
        <position position="301"/>
    </location>
</feature>
<feature type="modified residue" description="Phosphoserine" evidence="12">
    <location>
        <position position="309"/>
    </location>
</feature>
<feature type="splice variant" id="VSP_055519" description="In isoform 3." evidence="8">
    <location>
        <begin position="75"/>
        <end position="334"/>
    </location>
</feature>
<feature type="splice variant" id="VSP_055520" description="In isoform 2." evidence="8">
    <location>
        <begin position="149"/>
        <end position="212"/>
    </location>
</feature>
<feature type="sequence variant" id="VAR_033717" description="In dbSNP:rs34620829.">
    <original>T</original>
    <variation>A</variation>
    <location>
        <position position="311"/>
    </location>
</feature>
<feature type="sequence variant" id="VAR_088860" description="In CMD2I; likely pathogenic." evidence="6">
    <location>
        <begin position="316"/>
        <end position="477"/>
    </location>
</feature>
<feature type="sequence variant" id="VAR_033718" description="In dbSNP:rs34206659.">
    <original>Y</original>
    <variation>C</variation>
    <location>
        <position position="316"/>
    </location>
</feature>
<proteinExistence type="evidence at protein level"/>
<protein>
    <recommendedName>
        <fullName>Adenylyl cyclase-associated protein 2</fullName>
        <shortName>CAP 2</shortName>
    </recommendedName>
</protein>
<organism>
    <name type="scientific">Homo sapiens</name>
    <name type="common">Human</name>
    <dbReference type="NCBI Taxonomy" id="9606"/>
    <lineage>
        <taxon>Eukaryota</taxon>
        <taxon>Metazoa</taxon>
        <taxon>Chordata</taxon>
        <taxon>Craniata</taxon>
        <taxon>Vertebrata</taxon>
        <taxon>Euteleostomi</taxon>
        <taxon>Mammalia</taxon>
        <taxon>Eutheria</taxon>
        <taxon>Euarchontoglires</taxon>
        <taxon>Primates</taxon>
        <taxon>Haplorrhini</taxon>
        <taxon>Catarrhini</taxon>
        <taxon>Hominidae</taxon>
        <taxon>Homo</taxon>
    </lineage>
</organism>
<accession>P40123</accession>
<accession>B2R5Y3</accession>
<accession>B7Z1C4</accession>
<accession>B7Z214</accession>
<accession>Q6IAY2</accession>
<keyword id="KW-0007">Acetylation</keyword>
<keyword id="KW-0025">Alternative splicing</keyword>
<keyword id="KW-0122">Cardiomyopathy</keyword>
<keyword id="KW-1003">Cell membrane</keyword>
<keyword id="KW-0225">Disease variant</keyword>
<keyword id="KW-0472">Membrane</keyword>
<keyword id="KW-0597">Phosphoprotein</keyword>
<keyword id="KW-1267">Proteomics identification</keyword>
<keyword id="KW-1185">Reference proteome</keyword>